<gene>
    <name evidence="2" type="primary">lpp1</name>
    <name type="synonym">lppA</name>
    <name type="ordered locus">SPA1476</name>
</gene>
<protein>
    <recommendedName>
        <fullName evidence="2">Major outer membrane lipoprotein Lpp 1</fullName>
    </recommendedName>
    <alternativeName>
        <fullName evidence="2">Braun lipoprotein 1</fullName>
        <shortName evidence="2">BLP 1</shortName>
    </alternativeName>
    <alternativeName>
        <fullName evidence="2">Murein lipoprotein 1</fullName>
    </alternativeName>
</protein>
<proteinExistence type="inferred from homology"/>
<name>LPP1_SALPA</name>
<sequence length="78" mass="8391">MNRTKLVLGAVILGSTLLAGCSSNAKIDQLSSDVQTLNAKVDQLSNDVNAMRSDVQAAKDDAARANQRLDNQATKYRK</sequence>
<evidence type="ECO:0000250" key="1">
    <source>
        <dbReference type="UniProtKB" id="E8XH70"/>
    </source>
</evidence>
<evidence type="ECO:0000255" key="2">
    <source>
        <dbReference type="HAMAP-Rule" id="MF_00843"/>
    </source>
</evidence>
<evidence type="ECO:0000256" key="3">
    <source>
        <dbReference type="SAM" id="MobiDB-lite"/>
    </source>
</evidence>
<accession>Q5PH64</accession>
<feature type="signal peptide" evidence="2">
    <location>
        <begin position="1"/>
        <end position="20"/>
    </location>
</feature>
<feature type="chain" id="PRO_0000018339" description="Major outer membrane lipoprotein Lpp 1" evidence="2">
    <location>
        <begin position="21"/>
        <end position="78"/>
    </location>
</feature>
<feature type="repeat" evidence="2">
    <location>
        <begin position="24"/>
        <end position="34"/>
    </location>
</feature>
<feature type="repeat" evidence="2">
    <location>
        <begin position="38"/>
        <end position="48"/>
    </location>
</feature>
<feature type="region of interest" description="Disordered" evidence="3">
    <location>
        <begin position="56"/>
        <end position="78"/>
    </location>
</feature>
<feature type="coiled-coil region" evidence="2">
    <location>
        <begin position="27"/>
        <end position="75"/>
    </location>
</feature>
<feature type="compositionally biased region" description="Polar residues" evidence="3">
    <location>
        <begin position="68"/>
        <end position="78"/>
    </location>
</feature>
<feature type="modified residue" description="N6-murein peptidoglycan lysine" evidence="2">
    <location>
        <position position="78"/>
    </location>
</feature>
<feature type="lipid moiety-binding region" description="N-palmitoyl cysteine" evidence="2">
    <location>
        <position position="21"/>
    </location>
</feature>
<feature type="lipid moiety-binding region" description="S-diacylglycerol cysteine" evidence="2">
    <location>
        <position position="21"/>
    </location>
</feature>
<dbReference type="EMBL" id="CP000026">
    <property type="protein sequence ID" value="AAV77413.1"/>
    <property type="molecule type" value="Genomic_DNA"/>
</dbReference>
<dbReference type="SMR" id="Q5PH64"/>
<dbReference type="KEGG" id="spt:SPA1476"/>
<dbReference type="HOGENOM" id="CLU_166934_2_1_6"/>
<dbReference type="Proteomes" id="UP000008185">
    <property type="component" value="Chromosome"/>
</dbReference>
<dbReference type="GO" id="GO:0009279">
    <property type="term" value="C:cell outer membrane"/>
    <property type="evidence" value="ECO:0007669"/>
    <property type="project" value="UniProtKB-SubCell"/>
</dbReference>
<dbReference type="GO" id="GO:0005576">
    <property type="term" value="C:extracellular region"/>
    <property type="evidence" value="ECO:0007669"/>
    <property type="project" value="UniProtKB-KW"/>
</dbReference>
<dbReference type="GO" id="GO:0008289">
    <property type="term" value="F:lipid binding"/>
    <property type="evidence" value="ECO:0007669"/>
    <property type="project" value="UniProtKB-UniRule"/>
</dbReference>
<dbReference type="GO" id="GO:0042834">
    <property type="term" value="F:peptidoglycan binding"/>
    <property type="evidence" value="ECO:0007669"/>
    <property type="project" value="UniProtKB-UniRule"/>
</dbReference>
<dbReference type="GO" id="GO:0030258">
    <property type="term" value="P:lipid modification"/>
    <property type="evidence" value="ECO:0007669"/>
    <property type="project" value="UniProtKB-UniRule"/>
</dbReference>
<dbReference type="GO" id="GO:0043580">
    <property type="term" value="P:periplasmic space organization"/>
    <property type="evidence" value="ECO:0007669"/>
    <property type="project" value="UniProtKB-UniRule"/>
</dbReference>
<dbReference type="FunFam" id="1.20.5.190:FF:000002">
    <property type="entry name" value="Major outer membrane lipoprotein"/>
    <property type="match status" value="1"/>
</dbReference>
<dbReference type="Gene3D" id="1.20.5.190">
    <property type="match status" value="1"/>
</dbReference>
<dbReference type="HAMAP" id="MF_00843">
    <property type="entry name" value="Lpp"/>
    <property type="match status" value="1"/>
</dbReference>
<dbReference type="InterPro" id="IPR006817">
    <property type="entry name" value="Lipoprotein_leucine-zipper_dom"/>
</dbReference>
<dbReference type="InterPro" id="IPR016367">
    <property type="entry name" value="MOM_Lpp"/>
</dbReference>
<dbReference type="NCBIfam" id="NF040598">
    <property type="entry name" value="Ala_zip_lipo"/>
    <property type="match status" value="1"/>
</dbReference>
<dbReference type="NCBIfam" id="NF011925">
    <property type="entry name" value="PRK15396.1"/>
    <property type="match status" value="1"/>
</dbReference>
<dbReference type="PANTHER" id="PTHR38763:SF1">
    <property type="entry name" value="MAJOR OUTER MEMBRANE LIPOPROTEIN LPP"/>
    <property type="match status" value="1"/>
</dbReference>
<dbReference type="PANTHER" id="PTHR38763">
    <property type="entry name" value="MAJOR OUTER MEMBRANE PROLIPOPROTEIN LPP"/>
    <property type="match status" value="1"/>
</dbReference>
<dbReference type="Pfam" id="PF04728">
    <property type="entry name" value="LPP"/>
    <property type="match status" value="1"/>
</dbReference>
<dbReference type="PIRSF" id="PIRSF002855">
    <property type="entry name" value="Murein-lipoprotein"/>
    <property type="match status" value="1"/>
</dbReference>
<dbReference type="SUPFAM" id="SSF58042">
    <property type="entry name" value="Outer membrane lipoprotein"/>
    <property type="match status" value="1"/>
</dbReference>
<dbReference type="PROSITE" id="PS51257">
    <property type="entry name" value="PROKAR_LIPOPROTEIN"/>
    <property type="match status" value="1"/>
</dbReference>
<comment type="function">
    <text evidence="2">A highly abundant outer membrane lipoprotein that controls the distance between the inner and outer membranes. The only protein known to be covalently linked to the peptidoglycan network (PGN). Also non-covalently binds the PGN. The link between the cell outer membrane and PGN contributes to maintenance of the structural and functional integrity of the cell envelope, and maintains the correct distance between the PGN and the outer membrane.</text>
</comment>
<comment type="subunit">
    <text evidence="2">Homotrimer.</text>
</comment>
<comment type="subcellular location">
    <subcellularLocation>
        <location evidence="2">Cell outer membrane</location>
        <topology evidence="2">Lipid-anchor</topology>
        <orientation evidence="2">Periplasmic side</orientation>
    </subcellularLocation>
    <subcellularLocation>
        <location evidence="2">Secreted</location>
        <location evidence="2">Cell wall</location>
        <topology evidence="2">Peptidoglycan-anchor</topology>
    </subcellularLocation>
    <text evidence="2">Attached via its lipidated N-terminus to the inner leaflet of the outer membrane. Attached to the peptidoglycan network (PGN) via its C-terminus.</text>
</comment>
<comment type="induction">
    <text evidence="1">This gene is probably the major expressed form.</text>
</comment>
<comment type="similarity">
    <text evidence="2">Belongs to the Lpp family.</text>
</comment>
<reference key="1">
    <citation type="journal article" date="2004" name="Nat. Genet.">
        <title>Comparison of genome degradation in Paratyphi A and Typhi, human-restricted serovars of Salmonella enterica that cause typhoid.</title>
        <authorList>
            <person name="McClelland M."/>
            <person name="Sanderson K.E."/>
            <person name="Clifton S.W."/>
            <person name="Latreille P."/>
            <person name="Porwollik S."/>
            <person name="Sabo A."/>
            <person name="Meyer R."/>
            <person name="Bieri T."/>
            <person name="Ozersky P."/>
            <person name="McLellan M."/>
            <person name="Harkins C.R."/>
            <person name="Wang C."/>
            <person name="Nguyen C."/>
            <person name="Berghoff A."/>
            <person name="Elliott G."/>
            <person name="Kohlberg S."/>
            <person name="Strong C."/>
            <person name="Du F."/>
            <person name="Carter J."/>
            <person name="Kremizki C."/>
            <person name="Layman D."/>
            <person name="Leonard S."/>
            <person name="Sun H."/>
            <person name="Fulton L."/>
            <person name="Nash W."/>
            <person name="Miner T."/>
            <person name="Minx P."/>
            <person name="Delehaunty K."/>
            <person name="Fronick C."/>
            <person name="Magrini V."/>
            <person name="Nhan M."/>
            <person name="Warren W."/>
            <person name="Florea L."/>
            <person name="Spieth J."/>
            <person name="Wilson R.K."/>
        </authorList>
    </citation>
    <scope>NUCLEOTIDE SEQUENCE [LARGE SCALE GENOMIC DNA]</scope>
    <source>
        <strain>ATCC 9150 / SARB42</strain>
    </source>
</reference>
<keyword id="KW-0998">Cell outer membrane</keyword>
<keyword id="KW-0134">Cell wall</keyword>
<keyword id="KW-0175">Coiled coil</keyword>
<keyword id="KW-0449">Lipoprotein</keyword>
<keyword id="KW-0472">Membrane</keyword>
<keyword id="KW-0564">Palmitate</keyword>
<keyword id="KW-0572">Peptidoglycan-anchor</keyword>
<keyword id="KW-0677">Repeat</keyword>
<keyword id="KW-0964">Secreted</keyword>
<keyword id="KW-0732">Signal</keyword>
<organism>
    <name type="scientific">Salmonella paratyphi A (strain ATCC 9150 / SARB42)</name>
    <dbReference type="NCBI Taxonomy" id="295319"/>
    <lineage>
        <taxon>Bacteria</taxon>
        <taxon>Pseudomonadati</taxon>
        <taxon>Pseudomonadota</taxon>
        <taxon>Gammaproteobacteria</taxon>
        <taxon>Enterobacterales</taxon>
        <taxon>Enterobacteriaceae</taxon>
        <taxon>Salmonella</taxon>
    </lineage>
</organism>